<dbReference type="EMBL" id="CR858752">
    <property type="protein sequence ID" value="CAH90961.1"/>
    <property type="molecule type" value="mRNA"/>
</dbReference>
<dbReference type="RefSeq" id="NP_001125553.1">
    <property type="nucleotide sequence ID" value="NM_001132081.1"/>
</dbReference>
<dbReference type="RefSeq" id="XP_054402184.1">
    <property type="nucleotide sequence ID" value="XM_054546209.1"/>
</dbReference>
<dbReference type="RefSeq" id="XP_054402185.1">
    <property type="nucleotide sequence ID" value="XM_054546210.1"/>
</dbReference>
<dbReference type="SMR" id="Q5RB99"/>
<dbReference type="FunCoup" id="Q5RB99">
    <property type="interactions" value="2143"/>
</dbReference>
<dbReference type="STRING" id="9601.ENSPPYP00000009543"/>
<dbReference type="Ensembl" id="ENSPPYT00000009924.3">
    <property type="protein sequence ID" value="ENSPPYP00000009543.2"/>
    <property type="gene ID" value="ENSPPYG00000008492.3"/>
</dbReference>
<dbReference type="GeneID" id="100172466"/>
<dbReference type="KEGG" id="pon:100172466"/>
<dbReference type="CTD" id="6143"/>
<dbReference type="eggNOG" id="KOG1696">
    <property type="taxonomic scope" value="Eukaryota"/>
</dbReference>
<dbReference type="GeneTree" id="ENSGT00390000012628"/>
<dbReference type="HOGENOM" id="CLU_083919_0_1_1"/>
<dbReference type="InParanoid" id="Q5RB99"/>
<dbReference type="OMA" id="NRVWIDP"/>
<dbReference type="OrthoDB" id="5407653at2759"/>
<dbReference type="TreeFam" id="TF313598"/>
<dbReference type="Proteomes" id="UP000001595">
    <property type="component" value="Chromosome 17"/>
</dbReference>
<dbReference type="GO" id="GO:0022625">
    <property type="term" value="C:cytosolic large ribosomal subunit"/>
    <property type="evidence" value="ECO:0007669"/>
    <property type="project" value="Ensembl"/>
</dbReference>
<dbReference type="GO" id="GO:0005730">
    <property type="term" value="C:nucleolus"/>
    <property type="evidence" value="ECO:0007669"/>
    <property type="project" value="Ensembl"/>
</dbReference>
<dbReference type="GO" id="GO:0045202">
    <property type="term" value="C:synapse"/>
    <property type="evidence" value="ECO:0007669"/>
    <property type="project" value="Ensembl"/>
</dbReference>
<dbReference type="GO" id="GO:0003723">
    <property type="term" value="F:RNA binding"/>
    <property type="evidence" value="ECO:0007669"/>
    <property type="project" value="InterPro"/>
</dbReference>
<dbReference type="GO" id="GO:0003735">
    <property type="term" value="F:structural constituent of ribosome"/>
    <property type="evidence" value="ECO:0007669"/>
    <property type="project" value="Ensembl"/>
</dbReference>
<dbReference type="GO" id="GO:0002181">
    <property type="term" value="P:cytoplasmic translation"/>
    <property type="evidence" value="ECO:0007669"/>
    <property type="project" value="Ensembl"/>
</dbReference>
<dbReference type="CDD" id="cd01417">
    <property type="entry name" value="Ribosomal_L19e_E"/>
    <property type="match status" value="1"/>
</dbReference>
<dbReference type="FunFam" id="1.10.1200.240:FF:000001">
    <property type="entry name" value="Ribosomal protein L19"/>
    <property type="match status" value="1"/>
</dbReference>
<dbReference type="FunFam" id="1.10.1650.10:FF:000001">
    <property type="entry name" value="Ribosomal protein L19"/>
    <property type="match status" value="1"/>
</dbReference>
<dbReference type="Gene3D" id="1.10.1200.240">
    <property type="match status" value="1"/>
</dbReference>
<dbReference type="Gene3D" id="1.10.1650.10">
    <property type="match status" value="1"/>
</dbReference>
<dbReference type="HAMAP" id="MF_01475">
    <property type="entry name" value="Ribosomal_eL19"/>
    <property type="match status" value="1"/>
</dbReference>
<dbReference type="InterPro" id="IPR035970">
    <property type="entry name" value="60S_ribosomal_eL19_sf"/>
</dbReference>
<dbReference type="InterPro" id="IPR039547">
    <property type="entry name" value="Ribosomal_eL19"/>
</dbReference>
<dbReference type="InterPro" id="IPR023638">
    <property type="entry name" value="Ribosomal_eL19_CS"/>
</dbReference>
<dbReference type="InterPro" id="IPR000196">
    <property type="entry name" value="Ribosomal_eL19_dom"/>
</dbReference>
<dbReference type="InterPro" id="IPR015972">
    <property type="entry name" value="Ribosomal_eL19_dom1"/>
</dbReference>
<dbReference type="InterPro" id="IPR033935">
    <property type="entry name" value="Ribosomal_eL19_euk"/>
</dbReference>
<dbReference type="NCBIfam" id="NF006343">
    <property type="entry name" value="PRK08570.1"/>
    <property type="match status" value="1"/>
</dbReference>
<dbReference type="PANTHER" id="PTHR10722">
    <property type="entry name" value="60S RIBOSOMAL PROTEIN L19"/>
    <property type="match status" value="1"/>
</dbReference>
<dbReference type="Pfam" id="PF01280">
    <property type="entry name" value="Ribosomal_L19e"/>
    <property type="match status" value="1"/>
</dbReference>
<dbReference type="Pfam" id="PF25476">
    <property type="entry name" value="Ribosomal_L19e_C"/>
    <property type="match status" value="1"/>
</dbReference>
<dbReference type="SMART" id="SM01416">
    <property type="entry name" value="Ribosomal_L19e"/>
    <property type="match status" value="1"/>
</dbReference>
<dbReference type="SUPFAM" id="SSF48140">
    <property type="entry name" value="Ribosomal protein L19 (L19e)"/>
    <property type="match status" value="1"/>
</dbReference>
<dbReference type="PROSITE" id="PS00526">
    <property type="entry name" value="RIBOSOMAL_L19E"/>
    <property type="match status" value="1"/>
</dbReference>
<feature type="chain" id="PRO_0000230305" description="Large ribosomal subunit protein eL19">
    <location>
        <begin position="1"/>
        <end position="196"/>
    </location>
</feature>
<feature type="region of interest" description="Disordered" evidence="3">
    <location>
        <begin position="157"/>
        <end position="176"/>
    </location>
</feature>
<feature type="compositionally biased region" description="Basic and acidic residues" evidence="3">
    <location>
        <begin position="159"/>
        <end position="176"/>
    </location>
</feature>
<feature type="modified residue" description="Citrulline" evidence="2">
    <location>
        <position position="5"/>
    </location>
</feature>
<feature type="modified residue" description="Phosphoserine" evidence="1">
    <location>
        <position position="13"/>
    </location>
</feature>
<feature type="modified residue" description="Citrulline" evidence="2">
    <location>
        <position position="16"/>
    </location>
</feature>
<feature type="modified residue" description="Citrulline" evidence="2">
    <location>
        <position position="38"/>
    </location>
</feature>
<feature type="modified residue" description="Phosphoserine" evidence="1">
    <location>
        <position position="164"/>
    </location>
</feature>
<feature type="modified residue" description="Phosphothreonine" evidence="1">
    <location>
        <position position="187"/>
    </location>
</feature>
<feature type="cross-link" description="Glycyl lysine isopeptide (Lys-Gly) (interchain with G-Cter in SUMO1)" evidence="1">
    <location>
        <position position="181"/>
    </location>
</feature>
<protein>
    <recommendedName>
        <fullName evidence="4">Large ribosomal subunit protein eL19</fullName>
    </recommendedName>
    <alternativeName>
        <fullName>60S ribosomal protein L19</fullName>
    </alternativeName>
</protein>
<sequence>MSMLRLQKRLASSVLRCGKKKVWLDPNETNEIANANSRQQIRKLIKDGLIIRKPVTVHSRARCRKNTLARRKGRHMGIGKRKGTANARMPEKVTWMRRMRILRRLLRRYRESKKIDRHMYHSLYLKVKGNVFKNKRILMEHIHKLKADKARKKLLADQAEARRSKTKEARKRREERLQAKKEEIIKTLSKEEETKK</sequence>
<reference key="1">
    <citation type="submission" date="2004-11" db="EMBL/GenBank/DDBJ databases">
        <authorList>
            <consortium name="The German cDNA consortium"/>
        </authorList>
    </citation>
    <scope>NUCLEOTIDE SEQUENCE [LARGE SCALE MRNA]</scope>
    <source>
        <tissue>Kidney</tissue>
    </source>
</reference>
<proteinExistence type="evidence at transcript level"/>
<name>RL19_PONAB</name>
<gene>
    <name type="primary">RPL19</name>
</gene>
<accession>Q5RB99</accession>
<comment type="function">
    <text evidence="1">Component of the large ribosomal subunit. The ribosome is a large ribonucleoprotein complex responsible for the synthesis of proteins in the cell.</text>
</comment>
<comment type="subunit">
    <text evidence="1">Component of the large ribosomal subunit.</text>
</comment>
<comment type="subcellular location">
    <subcellularLocation>
        <location evidence="1">Cytoplasm</location>
    </subcellularLocation>
</comment>
<comment type="PTM">
    <text evidence="2">Citrullinated by PADI4.</text>
</comment>
<comment type="similarity">
    <text evidence="4">Belongs to the eukaryotic ribosomal protein eL19 family.</text>
</comment>
<organism>
    <name type="scientific">Pongo abelii</name>
    <name type="common">Sumatran orangutan</name>
    <name type="synonym">Pongo pygmaeus abelii</name>
    <dbReference type="NCBI Taxonomy" id="9601"/>
    <lineage>
        <taxon>Eukaryota</taxon>
        <taxon>Metazoa</taxon>
        <taxon>Chordata</taxon>
        <taxon>Craniata</taxon>
        <taxon>Vertebrata</taxon>
        <taxon>Euteleostomi</taxon>
        <taxon>Mammalia</taxon>
        <taxon>Eutheria</taxon>
        <taxon>Euarchontoglires</taxon>
        <taxon>Primates</taxon>
        <taxon>Haplorrhini</taxon>
        <taxon>Catarrhini</taxon>
        <taxon>Hominidae</taxon>
        <taxon>Pongo</taxon>
    </lineage>
</organism>
<keyword id="KW-0164">Citrullination</keyword>
<keyword id="KW-0963">Cytoplasm</keyword>
<keyword id="KW-1017">Isopeptide bond</keyword>
<keyword id="KW-0597">Phosphoprotein</keyword>
<keyword id="KW-1185">Reference proteome</keyword>
<keyword id="KW-0687">Ribonucleoprotein</keyword>
<keyword id="KW-0689">Ribosomal protein</keyword>
<keyword id="KW-0832">Ubl conjugation</keyword>
<evidence type="ECO:0000250" key="1">
    <source>
        <dbReference type="UniProtKB" id="P84098"/>
    </source>
</evidence>
<evidence type="ECO:0000250" key="2">
    <source>
        <dbReference type="UniProtKB" id="P84099"/>
    </source>
</evidence>
<evidence type="ECO:0000256" key="3">
    <source>
        <dbReference type="SAM" id="MobiDB-lite"/>
    </source>
</evidence>
<evidence type="ECO:0000305" key="4"/>